<feature type="signal peptide" evidence="2">
    <location>
        <begin position="1"/>
        <end position="23"/>
    </location>
</feature>
<feature type="chain" id="PRO_0000289655" description="WAP four-disulfide core domain protein 12">
    <location>
        <begin position="24"/>
        <end position="111"/>
    </location>
</feature>
<feature type="domain" description="WAP" evidence="3">
    <location>
        <begin position="27"/>
        <end position="74"/>
    </location>
</feature>
<feature type="disulfide bond" evidence="3">
    <location>
        <begin position="34"/>
        <end position="62"/>
    </location>
</feature>
<feature type="disulfide bond" evidence="3">
    <location>
        <begin position="41"/>
        <end position="66"/>
    </location>
</feature>
<feature type="disulfide bond" evidence="3">
    <location>
        <begin position="49"/>
        <end position="61"/>
    </location>
</feature>
<feature type="disulfide bond" evidence="3">
    <location>
        <begin position="55"/>
        <end position="70"/>
    </location>
</feature>
<comment type="function">
    <text evidence="1">Antibacterial protein. Putative acid-stable proteinase inhibitor (By similarity).</text>
</comment>
<comment type="subcellular location">
    <subcellularLocation>
        <location evidence="4">Secreted</location>
    </subcellularLocation>
</comment>
<sequence length="111" mass="12187">MRSSRFLVLMVSLALVTLVASEGVKGNTEKPGVCPADNVRCIKSDPPQCHTDQDCQGIRKCCYLHCGFKCVIPVKELEEGGSKDEDVSRPCPESGWEVKPPGFFSTRCPQK</sequence>
<dbReference type="EMBL" id="DP000047">
    <property type="protein sequence ID" value="ABO53011.1"/>
    <property type="molecule type" value="Genomic_DNA"/>
</dbReference>
<dbReference type="RefSeq" id="XP_003936465.1">
    <property type="nucleotide sequence ID" value="XM_003936416.2"/>
</dbReference>
<dbReference type="SMR" id="A4K2X6"/>
<dbReference type="STRING" id="39432.ENSSBOP00000016172"/>
<dbReference type="MEROPS" id="I17.003"/>
<dbReference type="Ensembl" id="ENSSBOT00000032977.1">
    <property type="protein sequence ID" value="ENSSBOP00000016172.1"/>
    <property type="gene ID" value="ENSSBOG00000024796.1"/>
</dbReference>
<dbReference type="GeneID" id="101048032"/>
<dbReference type="KEGG" id="sbq:101048032"/>
<dbReference type="CTD" id="128488"/>
<dbReference type="GeneTree" id="ENSGT00390000012286"/>
<dbReference type="OMA" id="CIKSDPP"/>
<dbReference type="Proteomes" id="UP000233220">
    <property type="component" value="Unplaced"/>
</dbReference>
<dbReference type="GO" id="GO:0005576">
    <property type="term" value="C:extracellular region"/>
    <property type="evidence" value="ECO:0007669"/>
    <property type="project" value="UniProtKB-SubCell"/>
</dbReference>
<dbReference type="GO" id="GO:0004867">
    <property type="term" value="F:serine-type endopeptidase inhibitor activity"/>
    <property type="evidence" value="ECO:0007669"/>
    <property type="project" value="UniProtKB-KW"/>
</dbReference>
<dbReference type="GO" id="GO:0042742">
    <property type="term" value="P:defense response to bacterium"/>
    <property type="evidence" value="ECO:0007669"/>
    <property type="project" value="UniProtKB-KW"/>
</dbReference>
<dbReference type="FunFam" id="4.10.75.10:FF:000005">
    <property type="entry name" value="WAP four-disulfide core domain protein 12"/>
    <property type="match status" value="1"/>
</dbReference>
<dbReference type="Gene3D" id="4.10.75.10">
    <property type="entry name" value="Elafin-like"/>
    <property type="match status" value="1"/>
</dbReference>
<dbReference type="InterPro" id="IPR036645">
    <property type="entry name" value="Elafin-like_sf"/>
</dbReference>
<dbReference type="InterPro" id="IPR008197">
    <property type="entry name" value="WAP_dom"/>
</dbReference>
<dbReference type="PANTHER" id="PTHR47769">
    <property type="entry name" value="WAP FOUR-DISULFIDE CORE DOMAIN PROTEIN 8"/>
    <property type="match status" value="1"/>
</dbReference>
<dbReference type="PANTHER" id="PTHR47769:SF1">
    <property type="entry name" value="WAP FOUR-DISULFIDE CORE DOMAIN PROTEIN 8"/>
    <property type="match status" value="1"/>
</dbReference>
<dbReference type="Pfam" id="PF00095">
    <property type="entry name" value="WAP"/>
    <property type="match status" value="1"/>
</dbReference>
<dbReference type="PRINTS" id="PR00003">
    <property type="entry name" value="4DISULPHCORE"/>
</dbReference>
<dbReference type="SMART" id="SM00217">
    <property type="entry name" value="WAP"/>
    <property type="match status" value="1"/>
</dbReference>
<dbReference type="SUPFAM" id="SSF57256">
    <property type="entry name" value="Elafin-like"/>
    <property type="match status" value="1"/>
</dbReference>
<dbReference type="PROSITE" id="PS51390">
    <property type="entry name" value="WAP"/>
    <property type="match status" value="1"/>
</dbReference>
<reference key="1">
    <citation type="journal article" date="2007" name="Genome Res.">
        <title>Comparative sequence analyses reveal rapid and divergent evolutionary changes of the WFDC locus in the primate lineage.</title>
        <authorList>
            <consortium name="NISC comparative sequencing program"/>
            <person name="Hurle B."/>
            <person name="Swanson W."/>
            <person name="Green E.D."/>
        </authorList>
    </citation>
    <scope>NUCLEOTIDE SEQUENCE [GENOMIC DNA]</scope>
</reference>
<name>WFD12_SAIBB</name>
<protein>
    <recommendedName>
        <fullName>WAP four-disulfide core domain protein 12</fullName>
    </recommendedName>
</protein>
<proteinExistence type="inferred from homology"/>
<keyword id="KW-0044">Antibiotic</keyword>
<keyword id="KW-0929">Antimicrobial</keyword>
<keyword id="KW-1015">Disulfide bond</keyword>
<keyword id="KW-0646">Protease inhibitor</keyword>
<keyword id="KW-1185">Reference proteome</keyword>
<keyword id="KW-0964">Secreted</keyword>
<keyword id="KW-0722">Serine protease inhibitor</keyword>
<keyword id="KW-0732">Signal</keyword>
<organism>
    <name type="scientific">Saimiri boliviensis boliviensis</name>
    <name type="common">Bolivian squirrel monkey</name>
    <dbReference type="NCBI Taxonomy" id="39432"/>
    <lineage>
        <taxon>Eukaryota</taxon>
        <taxon>Metazoa</taxon>
        <taxon>Chordata</taxon>
        <taxon>Craniata</taxon>
        <taxon>Vertebrata</taxon>
        <taxon>Euteleostomi</taxon>
        <taxon>Mammalia</taxon>
        <taxon>Eutheria</taxon>
        <taxon>Euarchontoglires</taxon>
        <taxon>Primates</taxon>
        <taxon>Haplorrhini</taxon>
        <taxon>Platyrrhini</taxon>
        <taxon>Cebidae</taxon>
        <taxon>Saimiriinae</taxon>
        <taxon>Saimiri</taxon>
    </lineage>
</organism>
<accession>A4K2X6</accession>
<gene>
    <name type="primary">WFDC12</name>
</gene>
<evidence type="ECO:0000250" key="1"/>
<evidence type="ECO:0000255" key="2"/>
<evidence type="ECO:0000255" key="3">
    <source>
        <dbReference type="PROSITE-ProRule" id="PRU00722"/>
    </source>
</evidence>
<evidence type="ECO:0000305" key="4"/>